<dbReference type="EMBL" id="AP004723">
    <property type="protein sequence ID" value="BAD68987.1"/>
    <property type="molecule type" value="Genomic_DNA"/>
</dbReference>
<dbReference type="EMBL" id="AP006236">
    <property type="protein sequence ID" value="BAD69270.1"/>
    <property type="molecule type" value="Genomic_DNA"/>
</dbReference>
<dbReference type="EMBL" id="AP008207">
    <property type="protein sequence ID" value="BAF05036.1"/>
    <property type="molecule type" value="Genomic_DNA"/>
</dbReference>
<dbReference type="EMBL" id="AP014957">
    <property type="protein sequence ID" value="BAS72300.1"/>
    <property type="molecule type" value="Genomic_DNA"/>
</dbReference>
<dbReference type="EMBL" id="CM000138">
    <property type="protein sequence ID" value="EEE54638.1"/>
    <property type="molecule type" value="Genomic_DNA"/>
</dbReference>
<dbReference type="EMBL" id="AK065221">
    <property type="protein sequence ID" value="BAG89423.1"/>
    <property type="molecule type" value="mRNA"/>
</dbReference>
<dbReference type="RefSeq" id="XP_015621913.1">
    <property type="nucleotide sequence ID" value="XM_015766427.1"/>
</dbReference>
<dbReference type="SMR" id="Q5VMQ5"/>
<dbReference type="FunCoup" id="Q5VMQ5">
    <property type="interactions" value="2020"/>
</dbReference>
<dbReference type="STRING" id="39947.Q5VMQ5"/>
<dbReference type="PaxDb" id="39947-Q5VMQ5"/>
<dbReference type="EnsemblPlants" id="Os01t0495900-01">
    <property type="protein sequence ID" value="Os01t0495900-01"/>
    <property type="gene ID" value="Os01g0495900"/>
</dbReference>
<dbReference type="Gramene" id="Os01t0495900-01">
    <property type="protein sequence ID" value="Os01t0495900-01"/>
    <property type="gene ID" value="Os01g0495900"/>
</dbReference>
<dbReference type="KEGG" id="dosa:Os01g0495900"/>
<dbReference type="eggNOG" id="ENOG502QQC4">
    <property type="taxonomic scope" value="Eukaryota"/>
</dbReference>
<dbReference type="HOGENOM" id="CLU_012688_0_0_1"/>
<dbReference type="InParanoid" id="Q5VMQ5"/>
<dbReference type="OMA" id="IVPSYME"/>
<dbReference type="OrthoDB" id="2021019at2759"/>
<dbReference type="Proteomes" id="UP000000763">
    <property type="component" value="Chromosome 1"/>
</dbReference>
<dbReference type="Proteomes" id="UP000007752">
    <property type="component" value="Chromosome 1"/>
</dbReference>
<dbReference type="Proteomes" id="UP000059680">
    <property type="component" value="Chromosome 1"/>
</dbReference>
<dbReference type="GO" id="GO:0009570">
    <property type="term" value="C:chloroplast stroma"/>
    <property type="evidence" value="ECO:0007669"/>
    <property type="project" value="UniProtKB-SubCell"/>
</dbReference>
<dbReference type="GO" id="GO:1990904">
    <property type="term" value="C:ribonucleoprotein complex"/>
    <property type="evidence" value="ECO:0007669"/>
    <property type="project" value="UniProtKB-KW"/>
</dbReference>
<dbReference type="GO" id="GO:0003723">
    <property type="term" value="F:RNA binding"/>
    <property type="evidence" value="ECO:0007669"/>
    <property type="project" value="UniProtKB-KW"/>
</dbReference>
<dbReference type="GO" id="GO:0000373">
    <property type="term" value="P:Group II intron splicing"/>
    <property type="evidence" value="ECO:0007669"/>
    <property type="project" value="InterPro"/>
</dbReference>
<dbReference type="GO" id="GO:0006397">
    <property type="term" value="P:mRNA processing"/>
    <property type="evidence" value="ECO:0007669"/>
    <property type="project" value="UniProtKB-KW"/>
</dbReference>
<dbReference type="FunFam" id="3.30.110.60:FF:000002">
    <property type="entry name" value="CRS2-associated factor 1, chloroplastic"/>
    <property type="match status" value="2"/>
</dbReference>
<dbReference type="Gene3D" id="3.30.110.60">
    <property type="entry name" value="YhbY-like"/>
    <property type="match status" value="2"/>
</dbReference>
<dbReference type="InterPro" id="IPR044599">
    <property type="entry name" value="CAF1P_plant"/>
</dbReference>
<dbReference type="InterPro" id="IPR001890">
    <property type="entry name" value="RNA-binding_CRM"/>
</dbReference>
<dbReference type="InterPro" id="IPR035920">
    <property type="entry name" value="YhbY-like_sf"/>
</dbReference>
<dbReference type="PANTHER" id="PTHR46247">
    <property type="entry name" value="CRS2-ASSOCIATED FACTOR 1, CHLOROPLASTIC"/>
    <property type="match status" value="1"/>
</dbReference>
<dbReference type="PANTHER" id="PTHR46247:SF1">
    <property type="entry name" value="CRS2-ASSOCIATED FACTOR 1, CHLOROPLASTIC"/>
    <property type="match status" value="1"/>
</dbReference>
<dbReference type="Pfam" id="PF01985">
    <property type="entry name" value="CRS1_YhbY"/>
    <property type="match status" value="2"/>
</dbReference>
<dbReference type="SMART" id="SM01103">
    <property type="entry name" value="CRS1_YhbY"/>
    <property type="match status" value="2"/>
</dbReference>
<dbReference type="SUPFAM" id="SSF75471">
    <property type="entry name" value="YhbY-like"/>
    <property type="match status" value="2"/>
</dbReference>
<dbReference type="PROSITE" id="PS51295">
    <property type="entry name" value="CRM"/>
    <property type="match status" value="2"/>
</dbReference>
<feature type="transit peptide" description="Chloroplast" evidence="2">
    <location>
        <begin position="1"/>
        <end position="77"/>
    </location>
</feature>
<feature type="chain" id="PRO_0000283616" description="CRS2-associated factor 1, chloroplastic">
    <location>
        <begin position="78"/>
        <end position="701"/>
    </location>
</feature>
<feature type="domain" description="CRM 1" evidence="3">
    <location>
        <begin position="183"/>
        <end position="279"/>
    </location>
</feature>
<feature type="domain" description="CRM 2" evidence="3">
    <location>
        <begin position="301"/>
        <end position="397"/>
    </location>
</feature>
<feature type="region of interest" description="CRS2 binding" evidence="1">
    <location>
        <begin position="581"/>
        <end position="603"/>
    </location>
</feature>
<comment type="function">
    <text evidence="1">Required for the splicing of group IIB introns in chloroplasts. Forms splicing particles with CRS2. Interacts with RNA and confers intron specificity of the splicing particles (By similarity).</text>
</comment>
<comment type="subunit">
    <text evidence="1">Interacts with CRS2 and RNA. Part of large ribonucleo-protein complexes that include group IIB introns, CRS2 and CAF1 (By similarity).</text>
</comment>
<comment type="subcellular location">
    <subcellularLocation>
        <location evidence="1">Plastid</location>
        <location evidence="1">Chloroplast stroma</location>
    </subcellularLocation>
</comment>
<protein>
    <recommendedName>
        <fullName>CRS2-associated factor 1, chloroplastic</fullName>
    </recommendedName>
    <alternativeName>
        <fullName>Chloroplastic group IIA intron splicing facilitator CRS2-associated factor 1</fullName>
    </alternativeName>
</protein>
<accession>Q5VMQ5</accession>
<accession>B7EAM6</accession>
<reference key="1">
    <citation type="journal article" date="2002" name="Nature">
        <title>The genome sequence and structure of rice chromosome 1.</title>
        <authorList>
            <person name="Sasaki T."/>
            <person name="Matsumoto T."/>
            <person name="Yamamoto K."/>
            <person name="Sakata K."/>
            <person name="Baba T."/>
            <person name="Katayose Y."/>
            <person name="Wu J."/>
            <person name="Niimura Y."/>
            <person name="Cheng Z."/>
            <person name="Nagamura Y."/>
            <person name="Antonio B.A."/>
            <person name="Kanamori H."/>
            <person name="Hosokawa S."/>
            <person name="Masukawa M."/>
            <person name="Arikawa K."/>
            <person name="Chiden Y."/>
            <person name="Hayashi M."/>
            <person name="Okamoto M."/>
            <person name="Ando T."/>
            <person name="Aoki H."/>
            <person name="Arita K."/>
            <person name="Hamada M."/>
            <person name="Harada C."/>
            <person name="Hijishita S."/>
            <person name="Honda M."/>
            <person name="Ichikawa Y."/>
            <person name="Idonuma A."/>
            <person name="Iijima M."/>
            <person name="Ikeda M."/>
            <person name="Ikeno M."/>
            <person name="Ito S."/>
            <person name="Ito T."/>
            <person name="Ito Y."/>
            <person name="Ito Y."/>
            <person name="Iwabuchi A."/>
            <person name="Kamiya K."/>
            <person name="Karasawa W."/>
            <person name="Katagiri S."/>
            <person name="Kikuta A."/>
            <person name="Kobayashi N."/>
            <person name="Kono I."/>
            <person name="Machita K."/>
            <person name="Maehara T."/>
            <person name="Mizuno H."/>
            <person name="Mizubayashi T."/>
            <person name="Mukai Y."/>
            <person name="Nagasaki H."/>
            <person name="Nakashima M."/>
            <person name="Nakama Y."/>
            <person name="Nakamichi Y."/>
            <person name="Nakamura M."/>
            <person name="Namiki N."/>
            <person name="Negishi M."/>
            <person name="Ohta I."/>
            <person name="Ono N."/>
            <person name="Saji S."/>
            <person name="Sakai K."/>
            <person name="Shibata M."/>
            <person name="Shimokawa T."/>
            <person name="Shomura A."/>
            <person name="Song J."/>
            <person name="Takazaki Y."/>
            <person name="Terasawa K."/>
            <person name="Tsuji K."/>
            <person name="Waki K."/>
            <person name="Yamagata H."/>
            <person name="Yamane H."/>
            <person name="Yoshiki S."/>
            <person name="Yoshihara R."/>
            <person name="Yukawa K."/>
            <person name="Zhong H."/>
            <person name="Iwama H."/>
            <person name="Endo T."/>
            <person name="Ito H."/>
            <person name="Hahn J.H."/>
            <person name="Kim H.-I."/>
            <person name="Eun M.-Y."/>
            <person name="Yano M."/>
            <person name="Jiang J."/>
            <person name="Gojobori T."/>
        </authorList>
    </citation>
    <scope>NUCLEOTIDE SEQUENCE [LARGE SCALE GENOMIC DNA]</scope>
    <source>
        <strain>cv. Nipponbare</strain>
    </source>
</reference>
<reference key="2">
    <citation type="journal article" date="2005" name="Nature">
        <title>The map-based sequence of the rice genome.</title>
        <authorList>
            <consortium name="International rice genome sequencing project (IRGSP)"/>
        </authorList>
    </citation>
    <scope>NUCLEOTIDE SEQUENCE [LARGE SCALE GENOMIC DNA]</scope>
    <source>
        <strain>cv. Nipponbare</strain>
    </source>
</reference>
<reference key="3">
    <citation type="journal article" date="2008" name="Nucleic Acids Res.">
        <title>The rice annotation project database (RAP-DB): 2008 update.</title>
        <authorList>
            <consortium name="The rice annotation project (RAP)"/>
        </authorList>
    </citation>
    <scope>GENOME REANNOTATION</scope>
    <source>
        <strain>cv. Nipponbare</strain>
    </source>
</reference>
<reference key="4">
    <citation type="journal article" date="2013" name="Rice">
        <title>Improvement of the Oryza sativa Nipponbare reference genome using next generation sequence and optical map data.</title>
        <authorList>
            <person name="Kawahara Y."/>
            <person name="de la Bastide M."/>
            <person name="Hamilton J.P."/>
            <person name="Kanamori H."/>
            <person name="McCombie W.R."/>
            <person name="Ouyang S."/>
            <person name="Schwartz D.C."/>
            <person name="Tanaka T."/>
            <person name="Wu J."/>
            <person name="Zhou S."/>
            <person name="Childs K.L."/>
            <person name="Davidson R.M."/>
            <person name="Lin H."/>
            <person name="Quesada-Ocampo L."/>
            <person name="Vaillancourt B."/>
            <person name="Sakai H."/>
            <person name="Lee S.S."/>
            <person name="Kim J."/>
            <person name="Numa H."/>
            <person name="Itoh T."/>
            <person name="Buell C.R."/>
            <person name="Matsumoto T."/>
        </authorList>
    </citation>
    <scope>GENOME REANNOTATION</scope>
    <source>
        <strain>cv. Nipponbare</strain>
    </source>
</reference>
<reference key="5">
    <citation type="journal article" date="2005" name="PLoS Biol.">
        <title>The genomes of Oryza sativa: a history of duplications.</title>
        <authorList>
            <person name="Yu J."/>
            <person name="Wang J."/>
            <person name="Lin W."/>
            <person name="Li S."/>
            <person name="Li H."/>
            <person name="Zhou J."/>
            <person name="Ni P."/>
            <person name="Dong W."/>
            <person name="Hu S."/>
            <person name="Zeng C."/>
            <person name="Zhang J."/>
            <person name="Zhang Y."/>
            <person name="Li R."/>
            <person name="Xu Z."/>
            <person name="Li S."/>
            <person name="Li X."/>
            <person name="Zheng H."/>
            <person name="Cong L."/>
            <person name="Lin L."/>
            <person name="Yin J."/>
            <person name="Geng J."/>
            <person name="Li G."/>
            <person name="Shi J."/>
            <person name="Liu J."/>
            <person name="Lv H."/>
            <person name="Li J."/>
            <person name="Wang J."/>
            <person name="Deng Y."/>
            <person name="Ran L."/>
            <person name="Shi X."/>
            <person name="Wang X."/>
            <person name="Wu Q."/>
            <person name="Li C."/>
            <person name="Ren X."/>
            <person name="Wang J."/>
            <person name="Wang X."/>
            <person name="Li D."/>
            <person name="Liu D."/>
            <person name="Zhang X."/>
            <person name="Ji Z."/>
            <person name="Zhao W."/>
            <person name="Sun Y."/>
            <person name="Zhang Z."/>
            <person name="Bao J."/>
            <person name="Han Y."/>
            <person name="Dong L."/>
            <person name="Ji J."/>
            <person name="Chen P."/>
            <person name="Wu S."/>
            <person name="Liu J."/>
            <person name="Xiao Y."/>
            <person name="Bu D."/>
            <person name="Tan J."/>
            <person name="Yang L."/>
            <person name="Ye C."/>
            <person name="Zhang J."/>
            <person name="Xu J."/>
            <person name="Zhou Y."/>
            <person name="Yu Y."/>
            <person name="Zhang B."/>
            <person name="Zhuang S."/>
            <person name="Wei H."/>
            <person name="Liu B."/>
            <person name="Lei M."/>
            <person name="Yu H."/>
            <person name="Li Y."/>
            <person name="Xu H."/>
            <person name="Wei S."/>
            <person name="He X."/>
            <person name="Fang L."/>
            <person name="Zhang Z."/>
            <person name="Zhang Y."/>
            <person name="Huang X."/>
            <person name="Su Z."/>
            <person name="Tong W."/>
            <person name="Li J."/>
            <person name="Tong Z."/>
            <person name="Li S."/>
            <person name="Ye J."/>
            <person name="Wang L."/>
            <person name="Fang L."/>
            <person name="Lei T."/>
            <person name="Chen C.-S."/>
            <person name="Chen H.-C."/>
            <person name="Xu Z."/>
            <person name="Li H."/>
            <person name="Huang H."/>
            <person name="Zhang F."/>
            <person name="Xu H."/>
            <person name="Li N."/>
            <person name="Zhao C."/>
            <person name="Li S."/>
            <person name="Dong L."/>
            <person name="Huang Y."/>
            <person name="Li L."/>
            <person name="Xi Y."/>
            <person name="Qi Q."/>
            <person name="Li W."/>
            <person name="Zhang B."/>
            <person name="Hu W."/>
            <person name="Zhang Y."/>
            <person name="Tian X."/>
            <person name="Jiao Y."/>
            <person name="Liang X."/>
            <person name="Jin J."/>
            <person name="Gao L."/>
            <person name="Zheng W."/>
            <person name="Hao B."/>
            <person name="Liu S.-M."/>
            <person name="Wang W."/>
            <person name="Yuan L."/>
            <person name="Cao M."/>
            <person name="McDermott J."/>
            <person name="Samudrala R."/>
            <person name="Wang J."/>
            <person name="Wong G.K.-S."/>
            <person name="Yang H."/>
        </authorList>
    </citation>
    <scope>NUCLEOTIDE SEQUENCE [LARGE SCALE GENOMIC DNA]</scope>
    <source>
        <strain>cv. Nipponbare</strain>
    </source>
</reference>
<reference key="6">
    <citation type="journal article" date="2003" name="Science">
        <title>Collection, mapping, and annotation of over 28,000 cDNA clones from japonica rice.</title>
        <authorList>
            <consortium name="The rice full-length cDNA consortium"/>
        </authorList>
    </citation>
    <scope>NUCLEOTIDE SEQUENCE [LARGE SCALE MRNA]</scope>
    <source>
        <strain>cv. Nipponbare</strain>
    </source>
</reference>
<keyword id="KW-0150">Chloroplast</keyword>
<keyword id="KW-0507">mRNA processing</keyword>
<keyword id="KW-0508">mRNA splicing</keyword>
<keyword id="KW-0934">Plastid</keyword>
<keyword id="KW-1185">Reference proteome</keyword>
<keyword id="KW-0677">Repeat</keyword>
<keyword id="KW-0687">Ribonucleoprotein</keyword>
<keyword id="KW-0694">RNA-binding</keyword>
<keyword id="KW-0809">Transit peptide</keyword>
<sequence>MATSHLTSRSLLVQAQYPISRLPSNLRLSLSHHKQPAAVAKRRRAPAPSHPAFSSVIRGRPKKVPIPENGEPAAGVRVTERGLAYHLDGAPFEFQYSYTETPRARPVALREAPFLPFGPEVTPRPWTGRKPLPKSRKELPEFDSFMLPPPGKKGVKPVQSPGPFLAGTEPRYQAASREEVLGEPLTKEEVDELVKATLKTKRQLNIGRDGLTHNMLENIHSHWKRKRVCKIKCKGVCTVDMDNVCQQLEEKVGGKVIHHQGGVIFLFRGRNYNYRTRPIYPLMLWKPAAPVYPRLVKKIPDGLTPDEAEDMRKRGRQLPPICKLGKNGVYLNLVKQVREAFEACDLVRVDCSGLNKSDCRKIGAKLKDLVPCTLLSFEFEHILMWRGNDWKSSLPPLEENDFKVASDQILNSKEAGSGSALTPIELVNNATSLKKCNLIEGAEKLEDSMKSSFENGMILGSACGNPGVCNSEGIDGTESSADAPIEFSPSNSARDLDPSQTSTLYCQSSLLDKSENGELIEMYPDRCGNSEQSPDVPEALTCLMGSSDEIHELETMRRNCKHLNGSDGVNSDSIVPSYMEGILLLFKQAIDSGMALVLNENEFADANYVYQKSVAFTKTAPRYLVLRHTPRKSHGTQKTEPAKNVRINKHLEEHKVSDHVKKKEIVMGGSRMQRNDHAREFLSDVVPQGTLRVDELAKLLA</sequence>
<gene>
    <name type="ordered locus">Os01g0495900</name>
    <name type="ordered locus">LOC_Os01g31110</name>
    <name type="ORF">OJ1126_G08.1</name>
    <name evidence="4" type="ORF">OsJ_01906</name>
    <name type="ORF">OSJNBa0029L04.25</name>
</gene>
<name>CAF1P_ORYSJ</name>
<evidence type="ECO:0000250" key="1"/>
<evidence type="ECO:0000255" key="2"/>
<evidence type="ECO:0000255" key="3">
    <source>
        <dbReference type="PROSITE-ProRule" id="PRU00626"/>
    </source>
</evidence>
<evidence type="ECO:0000312" key="4">
    <source>
        <dbReference type="EMBL" id="EEE54638.1"/>
    </source>
</evidence>
<organism>
    <name type="scientific">Oryza sativa subsp. japonica</name>
    <name type="common">Rice</name>
    <dbReference type="NCBI Taxonomy" id="39947"/>
    <lineage>
        <taxon>Eukaryota</taxon>
        <taxon>Viridiplantae</taxon>
        <taxon>Streptophyta</taxon>
        <taxon>Embryophyta</taxon>
        <taxon>Tracheophyta</taxon>
        <taxon>Spermatophyta</taxon>
        <taxon>Magnoliopsida</taxon>
        <taxon>Liliopsida</taxon>
        <taxon>Poales</taxon>
        <taxon>Poaceae</taxon>
        <taxon>BOP clade</taxon>
        <taxon>Oryzoideae</taxon>
        <taxon>Oryzeae</taxon>
        <taxon>Oryzinae</taxon>
        <taxon>Oryza</taxon>
        <taxon>Oryza sativa</taxon>
    </lineage>
</organism>
<proteinExistence type="evidence at transcript level"/>